<sequence>MLAMDQGVVEEWLSEFKTLEETAVYNYAVSLKEKGSLVPALYKVIRENYSDLLEPVCHQLFEFYRSGEPRLQRFTLQFLPELVWSYLSVTAARDPHCSGCIEALLLGIYNLEIVDKDGQSKVLSFTIPSLSKPSVYHEPSSIGSLALTEGALANHGLSRVVYSGPHLQRETFTAQNRFEVLTFLLLCYNASLSYMSGSSLQSLCQLSSRVSICGYPRQQVRRYKGISSRLMVTSEFLVQLITGIHFALCNGEVDLGSKALDDVLYRAQLELFPEALLVGNAIKSSLHGASLKSNKEGTRSIQVEITPTASRISRNAVTSLSIRGHRWKRHDAVDLGSPDELTEIAEVDEGICTQASGAQSSPPTIVISSSAGGAAAGAGKLAGKGLRRLTGRSSKEKDKEKDAATGMDQLTRKQAAVRAMSENLELLSLKRLTLTASQSVPKSGSLSLSRTASAVFSRSFEQVSNVFSGNQPSSRASSPTSNHVAEQDEGVAYLDHISPAHQHRQRSPTISIHVTSDL</sequence>
<feature type="chain" id="PRO_0000278093" description="Hyccin">
    <location>
        <begin position="1"/>
        <end position="518"/>
    </location>
</feature>
<feature type="region of interest" description="Disordered" evidence="2">
    <location>
        <begin position="385"/>
        <end position="410"/>
    </location>
</feature>
<feature type="region of interest" description="Disordered" evidence="2">
    <location>
        <begin position="466"/>
        <end position="492"/>
    </location>
</feature>
<feature type="compositionally biased region" description="Basic and acidic residues" evidence="2">
    <location>
        <begin position="393"/>
        <end position="403"/>
    </location>
</feature>
<feature type="compositionally biased region" description="Polar residues" evidence="2">
    <location>
        <begin position="466"/>
        <end position="484"/>
    </location>
</feature>
<proteinExistence type="evidence at transcript level"/>
<name>HYCCI_DANRE</name>
<organism>
    <name type="scientific">Danio rerio</name>
    <name type="common">Zebrafish</name>
    <name type="synonym">Brachydanio rerio</name>
    <dbReference type="NCBI Taxonomy" id="7955"/>
    <lineage>
        <taxon>Eukaryota</taxon>
        <taxon>Metazoa</taxon>
        <taxon>Chordata</taxon>
        <taxon>Craniata</taxon>
        <taxon>Vertebrata</taxon>
        <taxon>Euteleostomi</taxon>
        <taxon>Actinopterygii</taxon>
        <taxon>Neopterygii</taxon>
        <taxon>Teleostei</taxon>
        <taxon>Ostariophysi</taxon>
        <taxon>Cypriniformes</taxon>
        <taxon>Danionidae</taxon>
        <taxon>Danioninae</taxon>
        <taxon>Danio</taxon>
    </lineage>
</organism>
<protein>
    <recommendedName>
        <fullName>Hyccin</fullName>
    </recommendedName>
</protein>
<keyword id="KW-1003">Cell membrane</keyword>
<keyword id="KW-0963">Cytoplasm</keyword>
<keyword id="KW-0472">Membrane</keyword>
<keyword id="KW-1185">Reference proteome</keyword>
<accession>Q6P121</accession>
<gene>
    <name type="primary">hycc1</name>
    <name type="synonym">fam126a</name>
    <name type="ORF">zgc:77228</name>
</gene>
<evidence type="ECO:0000250" key="1">
    <source>
        <dbReference type="UniProtKB" id="Q9BYI3"/>
    </source>
</evidence>
<evidence type="ECO:0000256" key="2">
    <source>
        <dbReference type="SAM" id="MobiDB-lite"/>
    </source>
</evidence>
<evidence type="ECO:0000305" key="3"/>
<dbReference type="EMBL" id="BC065326">
    <property type="protein sequence ID" value="AAH65326.1"/>
    <property type="molecule type" value="mRNA"/>
</dbReference>
<dbReference type="RefSeq" id="NP_991193.1">
    <property type="nucleotide sequence ID" value="NM_205630.1"/>
</dbReference>
<dbReference type="RefSeq" id="XP_005173793.1">
    <property type="nucleotide sequence ID" value="XM_005173736.5"/>
</dbReference>
<dbReference type="RefSeq" id="XP_005173795.1">
    <property type="nucleotide sequence ID" value="XM_005173738.5"/>
</dbReference>
<dbReference type="RefSeq" id="XP_021323705.1">
    <property type="nucleotide sequence ID" value="XM_021468030.2"/>
</dbReference>
<dbReference type="RefSeq" id="XP_068071159.1">
    <property type="nucleotide sequence ID" value="XM_068215058.1"/>
</dbReference>
<dbReference type="SMR" id="Q6P121"/>
<dbReference type="FunCoup" id="Q6P121">
    <property type="interactions" value="1558"/>
</dbReference>
<dbReference type="STRING" id="7955.ENSDARP00000036397"/>
<dbReference type="PaxDb" id="7955-ENSDARP00000036397"/>
<dbReference type="Ensembl" id="ENSDART00000033132">
    <property type="protein sequence ID" value="ENSDARP00000036397"/>
    <property type="gene ID" value="ENSDARG00000026762"/>
</dbReference>
<dbReference type="GeneID" id="402926"/>
<dbReference type="KEGG" id="dre:402926"/>
<dbReference type="AGR" id="ZFIN:ZDB-GENE-040426-1806"/>
<dbReference type="CTD" id="84668"/>
<dbReference type="ZFIN" id="ZDB-GENE-040426-1806">
    <property type="gene designation" value="hycc1"/>
</dbReference>
<dbReference type="eggNOG" id="KOG4688">
    <property type="taxonomic scope" value="Eukaryota"/>
</dbReference>
<dbReference type="HOGENOM" id="CLU_027457_3_0_1"/>
<dbReference type="InParanoid" id="Q6P121"/>
<dbReference type="OMA" id="HAIYYAM"/>
<dbReference type="OrthoDB" id="18937at2759"/>
<dbReference type="PhylomeDB" id="Q6P121"/>
<dbReference type="TreeFam" id="TF317153"/>
<dbReference type="PRO" id="PR:Q6P121"/>
<dbReference type="Proteomes" id="UP000000437">
    <property type="component" value="Chromosome 19"/>
</dbReference>
<dbReference type="Bgee" id="ENSDARG00000026762">
    <property type="expression patterns" value="Expressed in retina and 21 other cell types or tissues"/>
</dbReference>
<dbReference type="ExpressionAtlas" id="Q6P121">
    <property type="expression patterns" value="baseline and differential"/>
</dbReference>
<dbReference type="GO" id="GO:0005829">
    <property type="term" value="C:cytosol"/>
    <property type="evidence" value="ECO:0000250"/>
    <property type="project" value="UniProtKB"/>
</dbReference>
<dbReference type="GO" id="GO:0005886">
    <property type="term" value="C:plasma membrane"/>
    <property type="evidence" value="ECO:0000250"/>
    <property type="project" value="UniProtKB"/>
</dbReference>
<dbReference type="GO" id="GO:0042552">
    <property type="term" value="P:myelination"/>
    <property type="evidence" value="ECO:0000250"/>
    <property type="project" value="UniProtKB"/>
</dbReference>
<dbReference type="GO" id="GO:0046854">
    <property type="term" value="P:phosphatidylinositol phosphate biosynthetic process"/>
    <property type="evidence" value="ECO:0000250"/>
    <property type="project" value="UniProtKB"/>
</dbReference>
<dbReference type="GO" id="GO:0072659">
    <property type="term" value="P:protein localization to plasma membrane"/>
    <property type="evidence" value="ECO:0000250"/>
    <property type="project" value="UniProtKB"/>
</dbReference>
<dbReference type="InterPro" id="IPR018619">
    <property type="entry name" value="Hyccin"/>
</dbReference>
<dbReference type="PANTHER" id="PTHR31220:SF4">
    <property type="entry name" value="HYCCIN"/>
    <property type="match status" value="1"/>
</dbReference>
<dbReference type="PANTHER" id="PTHR31220">
    <property type="entry name" value="HYCCIN RELATED"/>
    <property type="match status" value="1"/>
</dbReference>
<dbReference type="Pfam" id="PF09790">
    <property type="entry name" value="Hyccin"/>
    <property type="match status" value="1"/>
</dbReference>
<comment type="function">
    <text evidence="1">Component of a complex required to localize phosphatidylinositol 4-kinase (PI4K) to the plasma membrane. The complex acts as a regulator of phosphatidylinositol 4-phosphate (PtdIns(4)P) synthesis.</text>
</comment>
<comment type="subunit">
    <text evidence="1">Component of a phosphatidylinositol 4-kinase (PI4K) complex.</text>
</comment>
<comment type="subcellular location">
    <subcellularLocation>
        <location evidence="1">Cytoplasm</location>
        <location evidence="1">Cytosol</location>
    </subcellularLocation>
    <subcellularLocation>
        <location evidence="1">Cell membrane</location>
    </subcellularLocation>
</comment>
<comment type="similarity">
    <text evidence="3">Belongs to the Hyccin family.</text>
</comment>
<reference key="1">
    <citation type="submission" date="2004-01" db="EMBL/GenBank/DDBJ databases">
        <authorList>
            <consortium name="NIH - Zebrafish Gene Collection (ZGC) project"/>
        </authorList>
    </citation>
    <scope>NUCLEOTIDE SEQUENCE [LARGE SCALE MRNA]</scope>
    <source>
        <tissue>Embryo</tissue>
    </source>
</reference>